<proteinExistence type="evidence at protein level"/>
<evidence type="ECO:0000250" key="1"/>
<evidence type="ECO:0000255" key="2"/>
<evidence type="ECO:0000255" key="3">
    <source>
        <dbReference type="PROSITE-ProRule" id="PRU00596"/>
    </source>
</evidence>
<evidence type="ECO:0000269" key="4">
    <source>
    </source>
</evidence>
<evidence type="ECO:0000269" key="5">
    <source>
    </source>
</evidence>
<evidence type="ECO:0000305" key="6"/>
<evidence type="ECO:0000305" key="7">
    <source>
    </source>
</evidence>
<reference key="1">
    <citation type="journal article" date="2000" name="Nature">
        <title>Sequence and analysis of chromosome 1 of the plant Arabidopsis thaliana.</title>
        <authorList>
            <person name="Theologis A."/>
            <person name="Ecker J.R."/>
            <person name="Palm C.J."/>
            <person name="Federspiel N.A."/>
            <person name="Kaul S."/>
            <person name="White O."/>
            <person name="Alonso J."/>
            <person name="Altafi H."/>
            <person name="Araujo R."/>
            <person name="Bowman C.L."/>
            <person name="Brooks S.Y."/>
            <person name="Buehler E."/>
            <person name="Chan A."/>
            <person name="Chao Q."/>
            <person name="Chen H."/>
            <person name="Cheuk R.F."/>
            <person name="Chin C.W."/>
            <person name="Chung M.K."/>
            <person name="Conn L."/>
            <person name="Conway A.B."/>
            <person name="Conway A.R."/>
            <person name="Creasy T.H."/>
            <person name="Dewar K."/>
            <person name="Dunn P."/>
            <person name="Etgu P."/>
            <person name="Feldblyum T.V."/>
            <person name="Feng J.-D."/>
            <person name="Fong B."/>
            <person name="Fujii C.Y."/>
            <person name="Gill J.E."/>
            <person name="Goldsmith A.D."/>
            <person name="Haas B."/>
            <person name="Hansen N.F."/>
            <person name="Hughes B."/>
            <person name="Huizar L."/>
            <person name="Hunter J.L."/>
            <person name="Jenkins J."/>
            <person name="Johnson-Hopson C."/>
            <person name="Khan S."/>
            <person name="Khaykin E."/>
            <person name="Kim C.J."/>
            <person name="Koo H.L."/>
            <person name="Kremenetskaia I."/>
            <person name="Kurtz D.B."/>
            <person name="Kwan A."/>
            <person name="Lam B."/>
            <person name="Langin-Hooper S."/>
            <person name="Lee A."/>
            <person name="Lee J.M."/>
            <person name="Lenz C.A."/>
            <person name="Li J.H."/>
            <person name="Li Y.-P."/>
            <person name="Lin X."/>
            <person name="Liu S.X."/>
            <person name="Liu Z.A."/>
            <person name="Luros J.S."/>
            <person name="Maiti R."/>
            <person name="Marziali A."/>
            <person name="Militscher J."/>
            <person name="Miranda M."/>
            <person name="Nguyen M."/>
            <person name="Nierman W.C."/>
            <person name="Osborne B.I."/>
            <person name="Pai G."/>
            <person name="Peterson J."/>
            <person name="Pham P.K."/>
            <person name="Rizzo M."/>
            <person name="Rooney T."/>
            <person name="Rowley D."/>
            <person name="Sakano H."/>
            <person name="Salzberg S.L."/>
            <person name="Schwartz J.R."/>
            <person name="Shinn P."/>
            <person name="Southwick A.M."/>
            <person name="Sun H."/>
            <person name="Tallon L.J."/>
            <person name="Tambunga G."/>
            <person name="Toriumi M.J."/>
            <person name="Town C.D."/>
            <person name="Utterback T."/>
            <person name="Van Aken S."/>
            <person name="Vaysberg M."/>
            <person name="Vysotskaia V.S."/>
            <person name="Walker M."/>
            <person name="Wu D."/>
            <person name="Yu G."/>
            <person name="Fraser C.M."/>
            <person name="Venter J.C."/>
            <person name="Davis R.W."/>
        </authorList>
    </citation>
    <scope>NUCLEOTIDE SEQUENCE [LARGE SCALE GENOMIC DNA]</scope>
    <source>
        <strain>cv. Columbia</strain>
    </source>
</reference>
<reference key="2">
    <citation type="journal article" date="2017" name="Plant J.">
        <title>Araport11: a complete reannotation of the Arabidopsis thaliana reference genome.</title>
        <authorList>
            <person name="Cheng C.Y."/>
            <person name="Krishnakumar V."/>
            <person name="Chan A.P."/>
            <person name="Thibaud-Nissen F."/>
            <person name="Schobel S."/>
            <person name="Town C.D."/>
        </authorList>
    </citation>
    <scope>GENOME REANNOTATION</scope>
    <source>
        <strain>cv. Columbia</strain>
    </source>
</reference>
<reference key="3">
    <citation type="journal article" date="2003" name="Science">
        <title>Empirical analysis of transcriptional activity in the Arabidopsis genome.</title>
        <authorList>
            <person name="Yamada K."/>
            <person name="Lim J."/>
            <person name="Dale J.M."/>
            <person name="Chen H."/>
            <person name="Shinn P."/>
            <person name="Palm C.J."/>
            <person name="Southwick A.M."/>
            <person name="Wu H.C."/>
            <person name="Kim C.J."/>
            <person name="Nguyen M."/>
            <person name="Pham P.K."/>
            <person name="Cheuk R.F."/>
            <person name="Karlin-Newmann G."/>
            <person name="Liu S.X."/>
            <person name="Lam B."/>
            <person name="Sakano H."/>
            <person name="Wu T."/>
            <person name="Yu G."/>
            <person name="Miranda M."/>
            <person name="Quach H.L."/>
            <person name="Tripp M."/>
            <person name="Chang C.H."/>
            <person name="Lee J.M."/>
            <person name="Toriumi M.J."/>
            <person name="Chan M.M."/>
            <person name="Tang C.C."/>
            <person name="Onodera C.S."/>
            <person name="Deng J.M."/>
            <person name="Akiyama K."/>
            <person name="Ansari Y."/>
            <person name="Arakawa T."/>
            <person name="Banh J."/>
            <person name="Banno F."/>
            <person name="Bowser L."/>
            <person name="Brooks S.Y."/>
            <person name="Carninci P."/>
            <person name="Chao Q."/>
            <person name="Choy N."/>
            <person name="Enju A."/>
            <person name="Goldsmith A.D."/>
            <person name="Gurjal M."/>
            <person name="Hansen N.F."/>
            <person name="Hayashizaki Y."/>
            <person name="Johnson-Hopson C."/>
            <person name="Hsuan V.W."/>
            <person name="Iida K."/>
            <person name="Karnes M."/>
            <person name="Khan S."/>
            <person name="Koesema E."/>
            <person name="Ishida J."/>
            <person name="Jiang P.X."/>
            <person name="Jones T."/>
            <person name="Kawai J."/>
            <person name="Kamiya A."/>
            <person name="Meyers C."/>
            <person name="Nakajima M."/>
            <person name="Narusaka M."/>
            <person name="Seki M."/>
            <person name="Sakurai T."/>
            <person name="Satou M."/>
            <person name="Tamse R."/>
            <person name="Vaysberg M."/>
            <person name="Wallender E.K."/>
            <person name="Wong C."/>
            <person name="Yamamura Y."/>
            <person name="Yuan S."/>
            <person name="Shinozaki K."/>
            <person name="Davis R.W."/>
            <person name="Theologis A."/>
            <person name="Ecker J.R."/>
        </authorList>
    </citation>
    <scope>NUCLEOTIDE SEQUENCE [LARGE SCALE MRNA]</scope>
    <source>
        <strain>cv. Columbia</strain>
    </source>
</reference>
<reference key="4">
    <citation type="submission" date="2008-10" db="EMBL/GenBank/DDBJ databases">
        <title>Arabidopsis ORF clones.</title>
        <authorList>
            <person name="de los Reyes C."/>
            <person name="Quan R."/>
            <person name="Chen H."/>
            <person name="Bautista V."/>
            <person name="Kim C.J."/>
            <person name="Ecker J.R."/>
        </authorList>
    </citation>
    <scope>NUCLEOTIDE SEQUENCE [LARGE SCALE MRNA]</scope>
</reference>
<reference key="5">
    <citation type="journal article" date="2009" name="Plant J.">
        <title>Approaches to defining dual-targeted proteins in Arabidopsis.</title>
        <authorList>
            <person name="Carrie C."/>
            <person name="Kuehn K."/>
            <person name="Murcha M.W."/>
            <person name="Duncan O."/>
            <person name="Small I.D."/>
            <person name="O'Toole N."/>
            <person name="Whelan J."/>
        </authorList>
    </citation>
    <scope>SUBCELLULAR LOCATION</scope>
</reference>
<reference key="6">
    <citation type="journal article" date="2013" name="BMC Plant Biol.">
        <title>The Arabidopsis At1g30680 gene encodes a homologue to the phage T7 gp4 protein that has both DNA primase and DNA helicase activities.</title>
        <authorList>
            <person name="Diray-Arce J."/>
            <person name="Liu B."/>
            <person name="Cupp J.D."/>
            <person name="Hunt T."/>
            <person name="Nielsen B.L."/>
        </authorList>
    </citation>
    <scope>FUNCTION</scope>
    <scope>CATALYTIC ACTIVITY</scope>
    <scope>TISSUE SPECIFICITY</scope>
    <scope>SUBCELLULAR LOCATION</scope>
</reference>
<gene>
    <name type="ordered locus">At1g30680</name>
    <name type="ORF">T5I8.13</name>
</gene>
<feature type="transit peptide" description="Chloroplast and mitochondrion" evidence="2">
    <location>
        <begin position="1"/>
        <end position="16"/>
    </location>
</feature>
<feature type="chain" id="PRO_0000422119" description="Twinkle homolog protein, chloroplastic/mitochondrial">
    <location>
        <begin position="17"/>
        <end position="709"/>
    </location>
</feature>
<feature type="domain" description="Toprim">
    <location>
        <begin position="280"/>
        <end position="385"/>
    </location>
</feature>
<feature type="domain" description="SF4 helicase" evidence="3">
    <location>
        <begin position="430"/>
        <end position="698"/>
    </location>
</feature>
<feature type="binding site" evidence="1">
    <location>
        <position position="286"/>
    </location>
    <ligand>
        <name>Mg(2+)</name>
        <dbReference type="ChEBI" id="CHEBI:18420"/>
        <label>1</label>
        <note>catalytic</note>
    </ligand>
</feature>
<feature type="binding site" evidence="1">
    <location>
        <position position="348"/>
    </location>
    <ligand>
        <name>Mg(2+)</name>
        <dbReference type="ChEBI" id="CHEBI:18420"/>
        <label>1</label>
        <note>catalytic</note>
    </ligand>
</feature>
<feature type="binding site" evidence="1">
    <location>
        <position position="348"/>
    </location>
    <ligand>
        <name>Mg(2+)</name>
        <dbReference type="ChEBI" id="CHEBI:18420"/>
        <label>2</label>
    </ligand>
</feature>
<feature type="binding site" evidence="1">
    <location>
        <position position="350"/>
    </location>
    <ligand>
        <name>Mg(2+)</name>
        <dbReference type="ChEBI" id="CHEBI:18420"/>
        <label>2</label>
    </ligand>
</feature>
<feature type="binding site" evidence="3">
    <location>
        <begin position="460"/>
        <end position="467"/>
    </location>
    <ligand>
        <name>ATP</name>
        <dbReference type="ChEBI" id="CHEBI:30616"/>
    </ligand>
</feature>
<feature type="sequence conflict" description="In Ref. 3; AAO00844." evidence="6" ref="3">
    <original>D</original>
    <variation>N</variation>
    <location>
        <position position="552"/>
    </location>
</feature>
<keyword id="KW-0067">ATP-binding</keyword>
<keyword id="KW-0150">Chloroplast</keyword>
<keyword id="KW-0235">DNA replication</keyword>
<keyword id="KW-0238">DNA-binding</keyword>
<keyword id="KW-0347">Helicase</keyword>
<keyword id="KW-0378">Hydrolase</keyword>
<keyword id="KW-0460">Magnesium</keyword>
<keyword id="KW-0479">Metal-binding</keyword>
<keyword id="KW-0496">Mitochondrion</keyword>
<keyword id="KW-0547">Nucleotide-binding</keyword>
<keyword id="KW-0548">Nucleotidyltransferase</keyword>
<keyword id="KW-0934">Plastid</keyword>
<keyword id="KW-0639">Primosome</keyword>
<keyword id="KW-1185">Reference proteome</keyword>
<keyword id="KW-0808">Transferase</keyword>
<keyword id="KW-0809">Transit peptide</keyword>
<protein>
    <recommendedName>
        <fullName>Twinkle homolog protein, chloroplastic/mitochondrial</fullName>
    </recommendedName>
    <alternativeName>
        <fullName>DNA helicase</fullName>
        <ecNumber>3.6.4.12</ecNumber>
    </alternativeName>
    <alternativeName>
        <fullName>DNA primase</fullName>
        <ecNumber>2.7.7.-</ecNumber>
    </alternativeName>
</protein>
<dbReference type="EC" id="3.6.4.12"/>
<dbReference type="EC" id="2.7.7.-"/>
<dbReference type="EMBL" id="AC007060">
    <property type="protein sequence ID" value="AAD25755.1"/>
    <property type="status" value="ALT_SEQ"/>
    <property type="molecule type" value="Genomic_DNA"/>
</dbReference>
<dbReference type="EMBL" id="CP002684">
    <property type="protein sequence ID" value="AEE31259.1"/>
    <property type="molecule type" value="Genomic_DNA"/>
</dbReference>
<dbReference type="EMBL" id="BT002484">
    <property type="protein sequence ID" value="AAO00844.1"/>
    <property type="molecule type" value="mRNA"/>
</dbReference>
<dbReference type="EMBL" id="BT046201">
    <property type="protein sequence ID" value="ACI49800.1"/>
    <property type="molecule type" value="mRNA"/>
</dbReference>
<dbReference type="PIR" id="C86432">
    <property type="entry name" value="C86432"/>
</dbReference>
<dbReference type="RefSeq" id="NP_849735.1">
    <property type="nucleotide sequence ID" value="NM_179404.3"/>
</dbReference>
<dbReference type="SMR" id="B5X582"/>
<dbReference type="FunCoup" id="B5X582">
    <property type="interactions" value="1900"/>
</dbReference>
<dbReference type="STRING" id="3702.B5X582"/>
<dbReference type="GlyGen" id="B5X582">
    <property type="glycosylation" value="1 site"/>
</dbReference>
<dbReference type="PaxDb" id="3702-AT1G30680.1"/>
<dbReference type="ProteomicsDB" id="234636"/>
<dbReference type="EnsemblPlants" id="AT1G30680.1">
    <property type="protein sequence ID" value="AT1G30680.1"/>
    <property type="gene ID" value="AT1G30680"/>
</dbReference>
<dbReference type="GeneID" id="839948"/>
<dbReference type="Gramene" id="AT1G30680.1">
    <property type="protein sequence ID" value="AT1G30680.1"/>
    <property type="gene ID" value="AT1G30680"/>
</dbReference>
<dbReference type="KEGG" id="ath:AT1G30680"/>
<dbReference type="Araport" id="AT1G30680"/>
<dbReference type="TAIR" id="AT1G30680">
    <property type="gene designation" value="ATH"/>
</dbReference>
<dbReference type="eggNOG" id="ENOG502QPXS">
    <property type="taxonomic scope" value="Eukaryota"/>
</dbReference>
<dbReference type="HOGENOM" id="CLU_020382_0_0_1"/>
<dbReference type="InParanoid" id="B5X582"/>
<dbReference type="OMA" id="EGCKDAN"/>
<dbReference type="PhylomeDB" id="B5X582"/>
<dbReference type="BRENDA" id="3.6.4.12">
    <property type="organism ID" value="399"/>
</dbReference>
<dbReference type="CD-CODE" id="4299E36E">
    <property type="entry name" value="Nucleolus"/>
</dbReference>
<dbReference type="PRO" id="PR:B5X582"/>
<dbReference type="Proteomes" id="UP000006548">
    <property type="component" value="Chromosome 1"/>
</dbReference>
<dbReference type="ExpressionAtlas" id="B5X582">
    <property type="expression patterns" value="baseline and differential"/>
</dbReference>
<dbReference type="GO" id="GO:0009507">
    <property type="term" value="C:chloroplast"/>
    <property type="evidence" value="ECO:0007669"/>
    <property type="project" value="UniProtKB-SubCell"/>
</dbReference>
<dbReference type="GO" id="GO:0005739">
    <property type="term" value="C:mitochondrion"/>
    <property type="evidence" value="ECO:0007669"/>
    <property type="project" value="UniProtKB-SubCell"/>
</dbReference>
<dbReference type="GO" id="GO:0043139">
    <property type="term" value="F:5'-3' DNA helicase activity"/>
    <property type="evidence" value="ECO:0007669"/>
    <property type="project" value="InterPro"/>
</dbReference>
<dbReference type="GO" id="GO:0005524">
    <property type="term" value="F:ATP binding"/>
    <property type="evidence" value="ECO:0007669"/>
    <property type="project" value="UniProtKB-KW"/>
</dbReference>
<dbReference type="GO" id="GO:0016887">
    <property type="term" value="F:ATP hydrolysis activity"/>
    <property type="evidence" value="ECO:0007669"/>
    <property type="project" value="RHEA"/>
</dbReference>
<dbReference type="GO" id="GO:0003678">
    <property type="term" value="F:DNA helicase activity"/>
    <property type="evidence" value="ECO:0000314"/>
    <property type="project" value="UniProtKB"/>
</dbReference>
<dbReference type="GO" id="GO:0003899">
    <property type="term" value="F:DNA-directed RNA polymerase activity"/>
    <property type="evidence" value="ECO:0000314"/>
    <property type="project" value="UniProtKB"/>
</dbReference>
<dbReference type="GO" id="GO:0046872">
    <property type="term" value="F:metal ion binding"/>
    <property type="evidence" value="ECO:0007669"/>
    <property type="project" value="UniProtKB-KW"/>
</dbReference>
<dbReference type="GO" id="GO:0003697">
    <property type="term" value="F:single-stranded DNA binding"/>
    <property type="evidence" value="ECO:0000314"/>
    <property type="project" value="TAIR"/>
</dbReference>
<dbReference type="GO" id="GO:0006269">
    <property type="term" value="P:DNA replication, synthesis of primer"/>
    <property type="evidence" value="ECO:0007669"/>
    <property type="project" value="UniProtKB-KW"/>
</dbReference>
<dbReference type="GO" id="GO:0009260">
    <property type="term" value="P:ribonucleotide biosynthetic process"/>
    <property type="evidence" value="ECO:0000314"/>
    <property type="project" value="TAIR"/>
</dbReference>
<dbReference type="CDD" id="cd01029">
    <property type="entry name" value="TOPRIM_primases"/>
    <property type="match status" value="1"/>
</dbReference>
<dbReference type="Gene3D" id="3.40.1360.10">
    <property type="match status" value="1"/>
</dbReference>
<dbReference type="Gene3D" id="3.40.50.300">
    <property type="entry name" value="P-loop containing nucleotide triphosphate hydrolases"/>
    <property type="match status" value="1"/>
</dbReference>
<dbReference type="InterPro" id="IPR007694">
    <property type="entry name" value="DNA_helicase_DnaB-like_C"/>
</dbReference>
<dbReference type="InterPro" id="IPR027417">
    <property type="entry name" value="P-loop_NTPase"/>
</dbReference>
<dbReference type="InterPro" id="IPR034154">
    <property type="entry name" value="TOPRIM_DnaG/twinkle"/>
</dbReference>
<dbReference type="InterPro" id="IPR006171">
    <property type="entry name" value="TOPRIM_dom"/>
</dbReference>
<dbReference type="InterPro" id="IPR027032">
    <property type="entry name" value="Twinkle-like"/>
</dbReference>
<dbReference type="PANTHER" id="PTHR12873">
    <property type="entry name" value="T7-LIKE MITOCHONDRIAL DNA HELICASE"/>
    <property type="match status" value="1"/>
</dbReference>
<dbReference type="PANTHER" id="PTHR12873:SF0">
    <property type="entry name" value="TWINKLE MTDNA HELICASE"/>
    <property type="match status" value="1"/>
</dbReference>
<dbReference type="Pfam" id="PF03796">
    <property type="entry name" value="DnaB_C"/>
    <property type="match status" value="1"/>
</dbReference>
<dbReference type="Pfam" id="PF13662">
    <property type="entry name" value="Toprim_4"/>
    <property type="match status" value="1"/>
</dbReference>
<dbReference type="SMART" id="SM00493">
    <property type="entry name" value="TOPRIM"/>
    <property type="match status" value="1"/>
</dbReference>
<dbReference type="SUPFAM" id="SSF56731">
    <property type="entry name" value="DNA primase core"/>
    <property type="match status" value="1"/>
</dbReference>
<dbReference type="SUPFAM" id="SSF52540">
    <property type="entry name" value="P-loop containing nucleoside triphosphate hydrolases"/>
    <property type="match status" value="1"/>
</dbReference>
<dbReference type="PROSITE" id="PS51199">
    <property type="entry name" value="SF4_HELICASE"/>
    <property type="match status" value="1"/>
</dbReference>
<sequence>MRFLLRLPQIHFRKLSCSMSVLMGSKQFLEFCLLPSFASYPSSPSYSSSRQVSSVSRRFRPVLASRPVSKNSPYYQRTNGLSSYNSIPRVPTPVDTEVEADKRVVLSRLVTLRRKLAEQGVDAENCPPGQHSGLICPTCEGGNSGEKSLSLFIAPDGSSATWNCFRGKCGLKGGVRADGGLASADPIEKVERKITVEGIELEPLCDEIQDYFAARAISRKTLERNRVMQKRIGDEIVIAFTYWQRGELVSCKYRSLTKMFFQERKTRRILYGLDDIEKTSEVIIVEGEIDKLAMEEAGFLNCVSVPDGAPAKVSSKEIPSEDKDTKYKFLWNCNDYLKKASRIVIATDGDGPGQAMAEEIARRLGKERCWRVKWPKKSEDEHFKDANEVLMSKGPHLLKEAILDAEPYPILGLFSFKDFFDEIDAYYDRTHGHEYGVSTGWKNLDNLYSVVPGELTVVTGIPNSGKSEWIDAMLCNLNHSVGWKFALCSMENKVRDHARKLLEKHIKKPFFDADYGRSVQRMSVEEKDEGKKWLNDTFYPIRCEMDSLPSIDWVLERAKAAVLRYGIRGLVIDPYNELDHQRTPRQTETEYVSQMLTKIKRFSQHHSCHVWFVAHPKQLQHWDGGAPNLYDISGSAHFINKCDNGIIVHRNRDENAGPLDLVQIGVRKVRNKVAGQIGDAYLCYDRTTGSYSDSPVTPGMPERRSPKRY</sequence>
<organism>
    <name type="scientific">Arabidopsis thaliana</name>
    <name type="common">Mouse-ear cress</name>
    <dbReference type="NCBI Taxonomy" id="3702"/>
    <lineage>
        <taxon>Eukaryota</taxon>
        <taxon>Viridiplantae</taxon>
        <taxon>Streptophyta</taxon>
        <taxon>Embryophyta</taxon>
        <taxon>Tracheophyta</taxon>
        <taxon>Spermatophyta</taxon>
        <taxon>Magnoliopsida</taxon>
        <taxon>eudicotyledons</taxon>
        <taxon>Gunneridae</taxon>
        <taxon>Pentapetalae</taxon>
        <taxon>rosids</taxon>
        <taxon>malvids</taxon>
        <taxon>Brassicales</taxon>
        <taxon>Brassicaceae</taxon>
        <taxon>Camelineae</taxon>
        <taxon>Arabidopsis</taxon>
    </lineage>
</organism>
<accession>B5X582</accession>
<accession>Q8GUI8</accession>
<accession>Q9SA83</accession>
<comment type="function">
    <text evidence="5">Has both DNA primase and DNA helicase activities and may be involved in organelle DNA replication. Capable of producing RNA primers of 9 to 18 bases from a single-stranded DNA template.</text>
</comment>
<comment type="catalytic activity">
    <reaction evidence="5">
        <text>ATP + H2O = ADP + phosphate + H(+)</text>
        <dbReference type="Rhea" id="RHEA:13065"/>
        <dbReference type="ChEBI" id="CHEBI:15377"/>
        <dbReference type="ChEBI" id="CHEBI:15378"/>
        <dbReference type="ChEBI" id="CHEBI:30616"/>
        <dbReference type="ChEBI" id="CHEBI:43474"/>
        <dbReference type="ChEBI" id="CHEBI:456216"/>
        <dbReference type="EC" id="3.6.4.12"/>
    </reaction>
</comment>
<comment type="cofactor">
    <cofactor evidence="1">
        <name>Mg(2+)</name>
        <dbReference type="ChEBI" id="CHEBI:18420"/>
    </cofactor>
    <text evidence="1">Binds two Mg(2+) per subunit.</text>
</comment>
<comment type="subcellular location">
    <subcellularLocation>
        <location evidence="7">Plastid</location>
        <location evidence="7">Chloroplast</location>
    </subcellularLocation>
    <subcellularLocation>
        <location evidence="4 7">Mitochondrion</location>
    </subcellularLocation>
</comment>
<comment type="tissue specificity">
    <text evidence="5">Expressed in young leaves and shoot apex tissues. Detected in developing tissues such as cotyledons, sepals, pistils and inflorescences. Nearly undetectable in mature leaves.</text>
</comment>
<comment type="sequence caution" evidence="6">
    <conflict type="erroneous gene model prediction">
        <sequence resource="EMBL-CDS" id="AAD25755"/>
    </conflict>
</comment>
<name>TWIH_ARATH</name>